<organismHost>
    <name type="scientific">Prunus armeniaca</name>
    <name type="common">Apricot</name>
    <name type="synonym">Armeniaca vulgaris</name>
    <dbReference type="NCBI Taxonomy" id="36596"/>
</organismHost>
<organismHost>
    <name type="scientific">Prunus cerasifera</name>
    <name type="common">cherry plum</name>
    <dbReference type="NCBI Taxonomy" id="36595"/>
</organismHost>
<organismHost>
    <name type="scientific">Prunus domestica</name>
    <name type="common">Garden plum</name>
    <dbReference type="NCBI Taxonomy" id="3758"/>
</organismHost>
<organismHost>
    <name type="scientific">Prunus glandulosa</name>
    <dbReference type="NCBI Taxonomy" id="105665"/>
</organismHost>
<organismHost>
    <name type="scientific">Prunus persica</name>
    <name type="common">Peach</name>
    <name type="synonym">Amygdalus persica</name>
    <dbReference type="NCBI Taxonomy" id="3760"/>
</organismHost>
<organismHost>
    <name type="scientific">Prunus salicina</name>
    <dbReference type="NCBI Taxonomy" id="88123"/>
</organismHost>
<organismHost>
    <name type="scientific">Prunus spinosa</name>
    <name type="common">Blackthorn</name>
    <name type="synonym">Prunus domestica var. spinosa</name>
    <dbReference type="NCBI Taxonomy" id="114937"/>
</organismHost>
<sequence length="3140" mass="355997">MSTIVFGSFTCHLDAAIHQDNADRLAKAWTRPENRQVSNVHLLCRRAAKSLINTYESATASAWKGLEEKLQPMFAKREFSKTVTKRKGLRCFKESSEKFIEKKLKKQYKEERERFQFLNGPDAIVNQISVDKCEASVWVPFPHIIEKPSFTTPSMKKKVVFTKVRMSEASLQLFMRRVAANAKANGQKVEIIGRKRVVGHYTTKSRLTYFRTHVRHLDGSKPRYDLVLDEATKKILQLFANTSGFHHVHKKGEITPGMSGFVVNPMNLSDPMHVYDTDLFIVRGKHNSILVDSRCKVSKEQSNEIVHYSDPGKQFWDGFTNSFMQCKLRETDHQCTSDLDVKECGYVAALVCQAIIPCGKITCLQCAQKYSYMSQQEIRDRFSTVIEQHEKTVMDNYPQFSHVLAFLKRYRELMRVENQNYEAFKDITHMIGERKEAPFSHLNKINELIIKGGMMSAQDYIEASDHLRELARYQKNRTENIRSGSIKAFRNKISSKAHVNMQLMCDNQLDTNGNFVWGQREYHAKRFFRNYFDVIDVSEGYRRHIVRENPRGIRKLAIGNLVMSTNLAALRKQLLGEECIHFEVSKECTSKRGENFVYQCCCVTHEDGTPLESEIISPTKNHLVVGNSGDSKYVDLPTAKGGAMFIAKAGYCYINIFLAMLININEDEAKSFTKTVRDTIVPKLGTWPSMMDLATACHFLAVLYPETRNAELPRILVDHEAKIFHVVDSFGSLSTGMHVLKANTINQLISFASDTLDSSMKTYLVGGLEVDKCDEFKNVKLLIRSIYKPQIMEQVLKEEPYLLLMSVLSPGVLMALFNSGSLEKATQYWIARSHSLAAITAMLSALAAKVSLASTLNAQMSVIDEHAAVLCDSVFVGTKPYASYMMAVKTLERMKARTESDHTLNDLGFSVLRQATPHLVEKSYLQELEQAWRELSWSERFSAILESQRWRKHIPKPFIPKDAADLGGRYDISVRSLLGSQYKRLKDVVRRKRDDVVCYTHQSMGKLFCKAIGISTSFLPSTLKMFDMLIIFGLLLSIGATCNSMINEHKHLKQVAADREDKKRFKRLQVLYTRLLEKIGCTPTADEFLEYVQGENPDLSKYAEDLIGDGQVVVHQSKRDSQANLERVAAFVALVMMLFDSERSDGVYKILNKLKGVMGSIDQTVHHQNLDDIEDMLDEKKLTVDFVLQSNEVAPTVPFDSTFEKWWTNQLETGNVIPHYRTEGHFLEFTRENAAHIANEVMHGSHQDILIRGAVGSGKSTGLPFHLSKKGHVLLIEPTRPLAENVCKQLRGQPFNVNPTLRMRGMSTFGSTPITVMTSGYALHFLANNPTYLDNYKCIIFDECHVHDASAMAFRCLLSEYSYPGKILKVSATPPGYEVDFKTQKEVKVIVEEALSFQQFVSNLGTGCNSDILKHGVNVLVYVASYNEVDTLSKLLTDRSFKVSKVDGRTMKVGNVEIPTSGTQAKPHFVVATNIIENGVTLDIDVVVDFGLKVVPILDIDNRLVRYTKKSISYGERIQRLGRVGRNKPGMALRIGFTEKGLTQIPPIIATEAAFLCFTYGLPVMTNGVSTSLLAMCTVKQARTMQQFELSPFYTVALVRFDGTMHQEIFRLLKSYRLRDSEVILNKLAIPNSNVCGWMSVRDYKRQGCNLDLDENIRVPFYVKDIPETLHDKVWQAVETHKSDAGFGRICSSSACKIAYTLQTDIHSIPRTVKIIDALLEQERTKQAHFRAMTSQSCSSSNFSLSSITSAIRSKYAKDHTEENIGVLQMAKSQLLEFKNLNIDPSYPELVRNFGALECVHHQTKEGVSKTLQLKGHWNKRLITRDATLMLGVLGGGAWMIFTYLKDSFQEEVVHQGFNRRQRQKLKFRQARDNRMAREVYGDDSTMEDYFGSAYSKKGKSKGKTRGMGTKTRKFVNMYGYDPTDYNFVRFVDPLTGHTLDENPLMDINLVQEHFSQIRNDYIGDDKITMQHIMSNPGIVAYYIKDATQKALKVDLTPHNPLRVCDKTATIAGFPEREFELRQTGHPTFVEPNAIPKINEVGQEEVDHESKSLFRGLRDYNPIASSICQLNNSSGTRHSEMFGLGFGGLIVTNQHLFKRNDGELTIRSHHGEFVVKDTKTLKLLPCKGRDILIIRLPKDFPPFPKRLQFRTPTTEDRVCLIGSNFQTKSISSTMSETSATYSVDNSHFWKHWISTKDGHCGLPIVSTRDGSILGLHSLANSTNTQNFYAAFPDNFETTYLSNQDNDNWIKQWRYNPDEVCWGSLELKRDIPQMPFTVCKLLTDLDREFVYNQSKTTHWLRDKLEGNLKAVGACPGQLVTKHVVKGKCTLFETYLLTHPEEHEFFRPLMGAYQKSALNKDEYVKDLMKYSKPIVVGAVDCEQFERALDVVISMLISKGFEECNYVTDPDDIFSALNMKAAVGALYSGKKRDYFKNASEQDKEDFIKASCKRLFMGKKGVWNGSLKAELRPKEKVEANKTRSFTAAPIDTLLGGKVCVDDFNNQFYSLNLHCPWSVGMTKFRGGWDKLLRALPDGWIYCDADGSQFDSSLSPYLINAVLNIRLAFMEEWDIGEQMLSNLYTEIVYTPIATPDGTIVKKFKGNNSGQPSTVVDNTLMVILAMTYSLLKLGYHPDTHECICRYFVNGDDLVLAVHPAYESMYDELQEHFSQLGLNYTFTTKTENKEELWFMSHRGVLFEDMYIPKLEPERIVSILEWDRSNEPIHRLEAICASMVEAWGYKELLREIRKFYSWVLEQAPYNALSKDGKAPYIAETALRKLYTDSEASETEIERYLEAFYNDVDDSLDSNIVIHQADEEEDDEEVDAGRPTVVTAPAATVATTQPAPVIQPAPQTTAPMFNPIFTPATTQPAVRPVPPISGAKPRSFGVYGNEDASPSTSNTLVNTGRDRDVDAGSIGTFAVPRLKTMTSKLSLPKVKGKAIMNLNHLAHYSPAQVDLSNTRAPQSCFQTWYEGVKRDYDVTDEEMSIILNGLMVWCIENGTSPNINGMWVMMDGETQVEYPIKPLLDHAKPTFRQIMAHFSNVAEAYIEKRNYEKAYMPRYGIQRNLTDYSLARYAFDFYEMTSTTPVRAREAHIQMKAAALRNVQNRLFGLDGNVGTQEEDTERHTAGDVNRNMHNLLGVRGV</sequence>
<keyword id="KW-0067">ATP-binding</keyword>
<keyword id="KW-0167">Capsid protein</keyword>
<keyword id="KW-0191">Covalent protein-RNA linkage</keyword>
<keyword id="KW-1139">Helical capsid protein</keyword>
<keyword id="KW-0347">Helicase</keyword>
<keyword id="KW-1036">Host cytoplasmic vesicle</keyword>
<keyword id="KW-1048">Host nucleus</keyword>
<keyword id="KW-0945">Host-virus interaction</keyword>
<keyword id="KW-0378">Hydrolase</keyword>
<keyword id="KW-1090">Inhibition of host innate immune response by virus</keyword>
<keyword id="KW-0547">Nucleotide-binding</keyword>
<keyword id="KW-0548">Nucleotidyltransferase</keyword>
<keyword id="KW-0597">Phosphoprotein</keyword>
<keyword id="KW-0645">Protease</keyword>
<keyword id="KW-0688">Ribosomal frameshifting</keyword>
<keyword id="KW-0696">RNA-directed RNA polymerase</keyword>
<keyword id="KW-0720">Serine protease</keyword>
<keyword id="KW-0941">Suppressor of RNA silencing</keyword>
<keyword id="KW-0788">Thiol protease</keyword>
<keyword id="KW-0808">Transferase</keyword>
<keyword id="KW-0899">Viral immunoevasion</keyword>
<keyword id="KW-0693">Viral RNA replication</keyword>
<keyword id="KW-0946">Virion</keyword>
<dbReference type="EC" id="3.4.21.-"/>
<dbReference type="EC" id="3.4.22.45" evidence="2"/>
<dbReference type="EC" id="3.6.4.-"/>
<dbReference type="EC" id="3.4.22.44"/>
<dbReference type="EC" id="2.7.7.48"/>
<dbReference type="EMBL" id="M92280">
    <property type="protein sequence ID" value="AAB05823.1"/>
    <property type="molecule type" value="Genomic_RNA"/>
</dbReference>
<dbReference type="MEROPS" id="C04.001"/>
<dbReference type="Proteomes" id="UP000007637">
    <property type="component" value="Genome"/>
</dbReference>
<dbReference type="GO" id="GO:0019029">
    <property type="term" value="C:helical viral capsid"/>
    <property type="evidence" value="ECO:0007669"/>
    <property type="project" value="UniProtKB-KW"/>
</dbReference>
<dbReference type="GO" id="GO:0044161">
    <property type="term" value="C:host cell cytoplasmic vesicle"/>
    <property type="evidence" value="ECO:0007669"/>
    <property type="project" value="UniProtKB-SubCell"/>
</dbReference>
<dbReference type="GO" id="GO:0042025">
    <property type="term" value="C:host cell nucleus"/>
    <property type="evidence" value="ECO:0007669"/>
    <property type="project" value="UniProtKB-SubCell"/>
</dbReference>
<dbReference type="GO" id="GO:0005524">
    <property type="term" value="F:ATP binding"/>
    <property type="evidence" value="ECO:0007669"/>
    <property type="project" value="UniProtKB-KW"/>
</dbReference>
<dbReference type="GO" id="GO:0004197">
    <property type="term" value="F:cysteine-type endopeptidase activity"/>
    <property type="evidence" value="ECO:0007669"/>
    <property type="project" value="InterPro"/>
</dbReference>
<dbReference type="GO" id="GO:0004386">
    <property type="term" value="F:helicase activity"/>
    <property type="evidence" value="ECO:0007669"/>
    <property type="project" value="UniProtKB-KW"/>
</dbReference>
<dbReference type="GO" id="GO:0016818">
    <property type="term" value="F:hydrolase activity, acting on acid anhydrides, in phosphorus-containing anhydrides"/>
    <property type="evidence" value="ECO:0007669"/>
    <property type="project" value="InterPro"/>
</dbReference>
<dbReference type="GO" id="GO:0003723">
    <property type="term" value="F:RNA binding"/>
    <property type="evidence" value="ECO:0007669"/>
    <property type="project" value="InterPro"/>
</dbReference>
<dbReference type="GO" id="GO:0003968">
    <property type="term" value="F:RNA-directed RNA polymerase activity"/>
    <property type="evidence" value="ECO:0007669"/>
    <property type="project" value="UniProtKB-KW"/>
</dbReference>
<dbReference type="GO" id="GO:0008236">
    <property type="term" value="F:serine-type peptidase activity"/>
    <property type="evidence" value="ECO:0007669"/>
    <property type="project" value="UniProtKB-KW"/>
</dbReference>
<dbReference type="GO" id="GO:0005198">
    <property type="term" value="F:structural molecule activity"/>
    <property type="evidence" value="ECO:0007669"/>
    <property type="project" value="InterPro"/>
</dbReference>
<dbReference type="GO" id="GO:0006351">
    <property type="term" value="P:DNA-templated transcription"/>
    <property type="evidence" value="ECO:0007669"/>
    <property type="project" value="InterPro"/>
</dbReference>
<dbReference type="GO" id="GO:0006508">
    <property type="term" value="P:proteolysis"/>
    <property type="evidence" value="ECO:0007669"/>
    <property type="project" value="UniProtKB-KW"/>
</dbReference>
<dbReference type="GO" id="GO:0052170">
    <property type="term" value="P:symbiont-mediated suppression of host innate immune response"/>
    <property type="evidence" value="ECO:0007669"/>
    <property type="project" value="UniProtKB-KW"/>
</dbReference>
<dbReference type="GO" id="GO:0039694">
    <property type="term" value="P:viral RNA genome replication"/>
    <property type="evidence" value="ECO:0007669"/>
    <property type="project" value="InterPro"/>
</dbReference>
<dbReference type="GO" id="GO:0075523">
    <property type="term" value="P:viral translational frameshifting"/>
    <property type="evidence" value="ECO:0007669"/>
    <property type="project" value="UniProtKB-KW"/>
</dbReference>
<dbReference type="CDD" id="cd23175">
    <property type="entry name" value="ps-ssRNAv_Potyviridae_RdRp"/>
    <property type="match status" value="1"/>
</dbReference>
<dbReference type="Gene3D" id="3.30.70.270">
    <property type="match status" value="1"/>
</dbReference>
<dbReference type="Gene3D" id="3.90.70.150">
    <property type="entry name" value="Helper component proteinase"/>
    <property type="match status" value="1"/>
</dbReference>
<dbReference type="Gene3D" id="3.40.50.300">
    <property type="entry name" value="P-loop containing nucleotide triphosphate hydrolases"/>
    <property type="match status" value="2"/>
</dbReference>
<dbReference type="Gene3D" id="2.40.10.10">
    <property type="entry name" value="Trypsin-like serine proteases"/>
    <property type="match status" value="2"/>
</dbReference>
<dbReference type="InterPro" id="IPR011545">
    <property type="entry name" value="DEAD/DEAH_box_helicase_dom"/>
</dbReference>
<dbReference type="InterPro" id="IPR043502">
    <property type="entry name" value="DNA/RNA_pol_sf"/>
</dbReference>
<dbReference type="InterPro" id="IPR001456">
    <property type="entry name" value="HC-pro"/>
</dbReference>
<dbReference type="InterPro" id="IPR031159">
    <property type="entry name" value="HC_PRO_CPD_dom"/>
</dbReference>
<dbReference type="InterPro" id="IPR042308">
    <property type="entry name" value="HC_PRO_CPD_sf"/>
</dbReference>
<dbReference type="InterPro" id="IPR014001">
    <property type="entry name" value="Helicase_ATP-bd"/>
</dbReference>
<dbReference type="InterPro" id="IPR001650">
    <property type="entry name" value="Helicase_C-like"/>
</dbReference>
<dbReference type="InterPro" id="IPR027417">
    <property type="entry name" value="P-loop_NTPase"/>
</dbReference>
<dbReference type="InterPro" id="IPR002540">
    <property type="entry name" value="Pept_S30_P1_potyvir"/>
</dbReference>
<dbReference type="InterPro" id="IPR009003">
    <property type="entry name" value="Peptidase_S1_PA"/>
</dbReference>
<dbReference type="InterPro" id="IPR043504">
    <property type="entry name" value="Peptidase_S1_PA_chymotrypsin"/>
</dbReference>
<dbReference type="InterPro" id="IPR001592">
    <property type="entry name" value="Poty_coat"/>
</dbReference>
<dbReference type="InterPro" id="IPR001730">
    <property type="entry name" value="Potyv_NIa-pro_dom"/>
</dbReference>
<dbReference type="InterPro" id="IPR039560">
    <property type="entry name" value="Potyvirid-P3"/>
</dbReference>
<dbReference type="InterPro" id="IPR013648">
    <property type="entry name" value="PP_Potyviridae"/>
</dbReference>
<dbReference type="InterPro" id="IPR043128">
    <property type="entry name" value="Rev_trsase/Diguanyl_cyclase"/>
</dbReference>
<dbReference type="InterPro" id="IPR001205">
    <property type="entry name" value="RNA-dir_pol_C"/>
</dbReference>
<dbReference type="InterPro" id="IPR007094">
    <property type="entry name" value="RNA-dir_pol_PSvirus"/>
</dbReference>
<dbReference type="PANTHER" id="PTHR43519">
    <property type="entry name" value="ATP-DEPENDENT RNA HELICASE HRPB"/>
    <property type="match status" value="1"/>
</dbReference>
<dbReference type="PANTHER" id="PTHR43519:SF1">
    <property type="entry name" value="ATP-DEPENDENT RNA HELICASE HRPB"/>
    <property type="match status" value="1"/>
</dbReference>
<dbReference type="Pfam" id="PF00270">
    <property type="entry name" value="DEAD"/>
    <property type="match status" value="1"/>
</dbReference>
<dbReference type="Pfam" id="PF00271">
    <property type="entry name" value="Helicase_C"/>
    <property type="match status" value="1"/>
</dbReference>
<dbReference type="Pfam" id="PF00863">
    <property type="entry name" value="Peptidase_C4"/>
    <property type="match status" value="1"/>
</dbReference>
<dbReference type="Pfam" id="PF00851">
    <property type="entry name" value="Peptidase_C6"/>
    <property type="match status" value="1"/>
</dbReference>
<dbReference type="Pfam" id="PF01577">
    <property type="entry name" value="Peptidase_S30"/>
    <property type="match status" value="1"/>
</dbReference>
<dbReference type="Pfam" id="PF00767">
    <property type="entry name" value="Poty_coat"/>
    <property type="match status" value="1"/>
</dbReference>
<dbReference type="Pfam" id="PF08440">
    <property type="entry name" value="Poty_PP"/>
    <property type="match status" value="1"/>
</dbReference>
<dbReference type="Pfam" id="PF13608">
    <property type="entry name" value="Potyvirid-P3"/>
    <property type="match status" value="1"/>
</dbReference>
<dbReference type="Pfam" id="PF00680">
    <property type="entry name" value="RdRP_1"/>
    <property type="match status" value="1"/>
</dbReference>
<dbReference type="PRINTS" id="PR00966">
    <property type="entry name" value="NIAPOTYPTASE"/>
</dbReference>
<dbReference type="SMART" id="SM00487">
    <property type="entry name" value="DEXDc"/>
    <property type="match status" value="1"/>
</dbReference>
<dbReference type="SMART" id="SM00490">
    <property type="entry name" value="HELICc"/>
    <property type="match status" value="1"/>
</dbReference>
<dbReference type="SUPFAM" id="SSF56672">
    <property type="entry name" value="DNA/RNA polymerases"/>
    <property type="match status" value="1"/>
</dbReference>
<dbReference type="SUPFAM" id="SSF52540">
    <property type="entry name" value="P-loop containing nucleoside triphosphate hydrolases"/>
    <property type="match status" value="2"/>
</dbReference>
<dbReference type="SUPFAM" id="SSF50494">
    <property type="entry name" value="Trypsin-like serine proteases"/>
    <property type="match status" value="1"/>
</dbReference>
<dbReference type="PROSITE" id="PS51744">
    <property type="entry name" value="HC_PRO_CPD"/>
    <property type="match status" value="1"/>
</dbReference>
<dbReference type="PROSITE" id="PS51192">
    <property type="entry name" value="HELICASE_ATP_BIND_1"/>
    <property type="match status" value="1"/>
</dbReference>
<dbReference type="PROSITE" id="PS51194">
    <property type="entry name" value="HELICASE_CTER"/>
    <property type="match status" value="1"/>
</dbReference>
<dbReference type="PROSITE" id="PS51436">
    <property type="entry name" value="POTYVIRUS_NIA_PRO"/>
    <property type="match status" value="1"/>
</dbReference>
<dbReference type="PROSITE" id="PS51871">
    <property type="entry name" value="PV_P1_PRO"/>
    <property type="match status" value="1"/>
</dbReference>
<dbReference type="PROSITE" id="PS50507">
    <property type="entry name" value="RDRP_SSRNA_POS"/>
    <property type="match status" value="1"/>
</dbReference>
<evidence type="ECO:0000250" key="1"/>
<evidence type="ECO:0000250" key="2">
    <source>
        <dbReference type="UniProtKB" id="P04517"/>
    </source>
</evidence>
<evidence type="ECO:0000250" key="3">
    <source>
        <dbReference type="UniProtKB" id="P09814"/>
    </source>
</evidence>
<evidence type="ECO:0000250" key="4">
    <source>
        <dbReference type="UniProtKB" id="P13529"/>
    </source>
</evidence>
<evidence type="ECO:0000250" key="5">
    <source>
        <dbReference type="UniProtKB" id="P17767"/>
    </source>
</evidence>
<evidence type="ECO:0000250" key="6">
    <source>
        <dbReference type="UniProtKB" id="P18247"/>
    </source>
</evidence>
<evidence type="ECO:0000250" key="7">
    <source>
        <dbReference type="UniProtKB" id="P21231"/>
    </source>
</evidence>
<evidence type="ECO:0000250" key="8">
    <source>
        <dbReference type="UniProtKB" id="P89509"/>
    </source>
</evidence>
<evidence type="ECO:0000255" key="9"/>
<evidence type="ECO:0000255" key="10">
    <source>
        <dbReference type="PROSITE-ProRule" id="PRU00539"/>
    </source>
</evidence>
<evidence type="ECO:0000255" key="11">
    <source>
        <dbReference type="PROSITE-ProRule" id="PRU00541"/>
    </source>
</evidence>
<evidence type="ECO:0000255" key="12">
    <source>
        <dbReference type="PROSITE-ProRule" id="PRU00542"/>
    </source>
</evidence>
<evidence type="ECO:0000255" key="13">
    <source>
        <dbReference type="PROSITE-ProRule" id="PRU00766"/>
    </source>
</evidence>
<evidence type="ECO:0000255" key="14">
    <source>
        <dbReference type="PROSITE-ProRule" id="PRU01080"/>
    </source>
</evidence>
<evidence type="ECO:0000255" key="15">
    <source>
        <dbReference type="PROSITE-ProRule" id="PRU01219"/>
    </source>
</evidence>
<evidence type="ECO:0000256" key="16">
    <source>
        <dbReference type="SAM" id="MobiDB-lite"/>
    </source>
</evidence>
<evidence type="ECO:0000305" key="17"/>
<feature type="chain" id="PRO_0000420009" description="Genome polyprotein">
    <location>
        <begin position="1"/>
        <end position="3140"/>
    </location>
</feature>
<feature type="chain" id="PRO_0000040351" description="P1 protease" evidence="9">
    <location>
        <begin position="1"/>
        <end position="308"/>
    </location>
</feature>
<feature type="chain" id="PRO_0000040352" description="Helper component proteinase" evidence="9">
    <location>
        <begin position="309"/>
        <end position="766"/>
    </location>
</feature>
<feature type="chain" id="PRO_0000040353" description="Protein P3" evidence="1">
    <location>
        <begin position="767"/>
        <end position="1116"/>
    </location>
</feature>
<feature type="chain" id="PRO_0000040354" description="6 kDa protein 1" evidence="1">
    <location>
        <begin position="1117"/>
        <end position="1168"/>
    </location>
</feature>
<feature type="chain" id="PRO_0000040355" description="Cytoplasmic inclusion protein" evidence="1">
    <location>
        <begin position="1169"/>
        <end position="1803"/>
    </location>
</feature>
<feature type="chain" id="PRO_0000040356" description="6 kDa protein 2" evidence="1">
    <location>
        <begin position="1804"/>
        <end position="1856"/>
    </location>
</feature>
<feature type="chain" id="PRO_0000040357" description="Viral genome-linked protein" evidence="1">
    <location>
        <begin position="1857"/>
        <end position="2049"/>
    </location>
</feature>
<feature type="chain" id="PRO_0000040358" description="Nuclear inclusion protein A" evidence="1">
    <location>
        <begin position="2050"/>
        <end position="2292"/>
    </location>
</feature>
<feature type="chain" id="PRO_0000040359" description="Nuclear inclusion protein B" evidence="1">
    <location>
        <begin position="2293"/>
        <end position="2810"/>
    </location>
</feature>
<feature type="chain" id="PRO_0000040360" description="Capsid protein" evidence="1">
    <location>
        <begin position="2811"/>
        <end position="3140"/>
    </location>
</feature>
<feature type="domain" description="Peptidase S30" evidence="15">
    <location>
        <begin position="165"/>
        <end position="308"/>
    </location>
</feature>
<feature type="domain" description="Peptidase C6" evidence="14">
    <location>
        <begin position="644"/>
        <end position="766"/>
    </location>
</feature>
<feature type="domain" description="Helicase ATP-binding" evidence="11">
    <location>
        <begin position="1240"/>
        <end position="1392"/>
    </location>
</feature>
<feature type="domain" description="Helicase C-terminal" evidence="12">
    <location>
        <begin position="1411"/>
        <end position="1570"/>
    </location>
</feature>
<feature type="domain" description="Peptidase C4" evidence="13">
    <location>
        <begin position="2050"/>
        <end position="2268"/>
    </location>
</feature>
<feature type="domain" description="RdRp catalytic" evidence="10">
    <location>
        <begin position="2534"/>
        <end position="2658"/>
    </location>
</feature>
<feature type="region of interest" description="Disordered" evidence="16">
    <location>
        <begin position="2883"/>
        <end position="2905"/>
    </location>
</feature>
<feature type="short sequence motif" description="Involved in interaction with stylet and aphid transmission" evidence="1">
    <location>
        <begin position="360"/>
        <end position="363"/>
    </location>
</feature>
<feature type="short sequence motif" description="Involved in virions binding and aphid transmission" evidence="1">
    <location>
        <begin position="618"/>
        <end position="620"/>
    </location>
</feature>
<feature type="short sequence motif" description="DECH box">
    <location>
        <begin position="1342"/>
        <end position="1345"/>
    </location>
</feature>
<feature type="short sequence motif" description="Nuclear localization signal" evidence="9">
    <location>
        <begin position="1897"/>
        <end position="1904"/>
    </location>
</feature>
<feature type="compositionally biased region" description="Polar residues" evidence="16">
    <location>
        <begin position="2890"/>
        <end position="2900"/>
    </location>
</feature>
<feature type="active site" description="For P1 proteinase activity" evidence="15">
    <location>
        <position position="216"/>
    </location>
</feature>
<feature type="active site" description="For P1 proteinase activity" evidence="15">
    <location>
        <position position="225"/>
    </location>
</feature>
<feature type="active site" description="For P1 proteinase activity" evidence="15">
    <location>
        <position position="259"/>
    </location>
</feature>
<feature type="active site" description="For helper component proteinase activity" evidence="14">
    <location>
        <position position="652"/>
    </location>
</feature>
<feature type="active site" description="For helper component proteinase activity" evidence="14">
    <location>
        <position position="725"/>
    </location>
</feature>
<feature type="active site" description="For nuclear inclusion protein A activity" evidence="13">
    <location>
        <position position="2095"/>
    </location>
</feature>
<feature type="active site" description="For nuclear inclusion protein A activity" evidence="13">
    <location>
        <position position="2130"/>
    </location>
</feature>
<feature type="active site" description="For nuclear inclusion protein A activity" evidence="13">
    <location>
        <position position="2200"/>
    </location>
</feature>
<feature type="binding site" evidence="11">
    <location>
        <begin position="1253"/>
        <end position="1260"/>
    </location>
    <ligand>
        <name>ATP</name>
        <dbReference type="ChEBI" id="CHEBI:30616"/>
    </ligand>
</feature>
<feature type="site" description="Cleavage; by P1 proteinase" evidence="15">
    <location>
        <begin position="308"/>
        <end position="309"/>
    </location>
</feature>
<feature type="site" description="Cleavage; by autolysis" evidence="14">
    <location>
        <begin position="766"/>
        <end position="767"/>
    </location>
</feature>
<feature type="site" description="Cleavage; by NIa-pro" evidence="6">
    <location>
        <begin position="1116"/>
        <end position="1117"/>
    </location>
</feature>
<feature type="site" description="Cleavage; by NIa-pro" evidence="6">
    <location>
        <begin position="1168"/>
        <end position="1169"/>
    </location>
</feature>
<feature type="site" description="Cleavage; by NIa-pro" evidence="6">
    <location>
        <begin position="1803"/>
        <end position="1804"/>
    </location>
</feature>
<feature type="site" description="Cleavage; by NIa-pro" evidence="6">
    <location>
        <begin position="1856"/>
        <end position="1857"/>
    </location>
</feature>
<feature type="site" description="Cleavage; by NIa-pro" evidence="6">
    <location>
        <begin position="2049"/>
        <end position="2050"/>
    </location>
</feature>
<feature type="site" description="Cleavage; by NIa-pro" evidence="6">
    <location>
        <begin position="2292"/>
        <end position="2293"/>
    </location>
</feature>
<feature type="site" description="Cleavage; by NIa-pro" evidence="6">
    <location>
        <begin position="2810"/>
        <end position="2811"/>
    </location>
</feature>
<feature type="modified residue" description="O-(5'-phospho-RNA)-tyrosine" evidence="3">
    <location>
        <position position="1919"/>
    </location>
</feature>
<feature type="modified residue" description="Phosphoserine" evidence="5">
    <location>
        <position position="2891"/>
    </location>
</feature>
<feature type="modified residue" description="Phosphoserine" evidence="5">
    <location>
        <position position="2911"/>
    </location>
</feature>
<feature type="modified residue" description="Phosphoserine" evidence="5">
    <location>
        <position position="2928"/>
    </location>
</feature>
<feature type="modified residue" description="Phosphothreonine" evidence="5">
    <location>
        <position position="3064"/>
    </location>
</feature>
<feature type="modified residue" description="Phosphothreonine" evidence="5">
    <location>
        <position position="3123"/>
    </location>
</feature>
<accession>Q84934</accession>
<protein>
    <recommendedName>
        <fullName>Genome polyprotein</fullName>
    </recommendedName>
    <component>
        <recommendedName>
            <fullName>P1 protease</fullName>
            <ecNumber>3.4.21.-</ecNumber>
        </recommendedName>
        <alternativeName>
            <fullName>Leader protease P1</fullName>
        </alternativeName>
        <alternativeName>
            <fullName>N-terminal protein</fullName>
        </alternativeName>
        <alternativeName>
            <fullName>P1 proteinase</fullName>
        </alternativeName>
    </component>
    <component>
        <recommendedName>
            <fullName>Helper component proteinase</fullName>
            <shortName>HC-pro</shortName>
            <ecNumber evidence="2">3.4.22.45</ecNumber>
        </recommendedName>
    </component>
    <component>
        <recommendedName>
            <fullName>Protein P3</fullName>
        </recommendedName>
    </component>
    <component>
        <recommendedName>
            <fullName>6 kDa protein 1</fullName>
            <shortName>6K1</shortName>
        </recommendedName>
    </component>
    <component>
        <recommendedName>
            <fullName>Cytoplasmic inclusion protein</fullName>
            <shortName>CI</shortName>
            <ecNumber>3.6.4.-</ecNumber>
        </recommendedName>
    </component>
    <component>
        <recommendedName>
            <fullName>6 kDa protein 2</fullName>
            <shortName>6K2</shortName>
        </recommendedName>
    </component>
    <component>
        <recommendedName>
            <fullName>Viral genome-linked protein</fullName>
        </recommendedName>
        <alternativeName>
            <fullName>VPg</fullName>
        </alternativeName>
    </component>
    <component>
        <recommendedName>
            <fullName>Nuclear inclusion protein A</fullName>
            <shortName>NI-a</shortName>
            <shortName>NIa</shortName>
            <ecNumber>3.4.22.44</ecNumber>
        </recommendedName>
        <alternativeName>
            <fullName>49 kDa proteinase</fullName>
            <shortName>49 kDa-Pro</shortName>
        </alternativeName>
        <alternativeName>
            <fullName>NIa-pro</fullName>
        </alternativeName>
    </component>
    <component>
        <recommendedName>
            <fullName>Nuclear inclusion protein B</fullName>
            <shortName>NI-b</shortName>
            <shortName>NIb</shortName>
            <ecNumber>2.7.7.48</ecNumber>
        </recommendedName>
        <alternativeName>
            <fullName>RNA-directed RNA polymerase</fullName>
        </alternativeName>
    </component>
    <component>
        <recommendedName>
            <fullName>Capsid protein</fullName>
            <shortName>CP</shortName>
        </recommendedName>
        <alternativeName>
            <fullName>Coat protein</fullName>
        </alternativeName>
    </component>
</protein>
<proteinExistence type="inferred from homology"/>
<name>POLG_PPVSK</name>
<comment type="function">
    <molecule>Helper component proteinase</molecule>
    <text evidence="2">Required for aphid transmission and also has proteolytic activity. Only cleaves a Gly-Gly dipeptide at its own C-terminus. Interacts with virions and aphid stylets. Acts as a suppressor of RNA-mediated gene silencing, also known as post-transcriptional gene silencing (PTGS), a mechanism of plant viral defense that limits the accumulation of viral RNAs. May have RNA-binding activity.</text>
</comment>
<comment type="function">
    <molecule>Cytoplasmic inclusion protein</molecule>
    <text>Has helicase activity. It may be involved in replication.</text>
</comment>
<comment type="function">
    <molecule>6 kDa protein 1</molecule>
    <text evidence="4 8">Indispensable for virus replication (By similarity). Reduces the abundance of host transcripts related to jasmonic acid biosynthesis therefore altering the host defenses (By similarity). In order to increase its own stability, decreases host protein degradation pathways (By similarity).</text>
</comment>
<comment type="function">
    <molecule>6 kDa protein 2</molecule>
    <text evidence="3">Indispensable for virus replication.</text>
</comment>
<comment type="function">
    <molecule>Viral genome-linked protein</molecule>
    <text evidence="6">Mediates the cap-independent, EIF4E-dependent translation of viral genomic RNAs (By similarity). Binds to the cap-binding site of host EIF4E and thus interferes with the host EIF4E-dependent mRNA export and translation (By similarity). VPg-RNA directly binds EIF4E and is a template for transcription (By similarity). Also forms trimeric complexes with EIF4E-EIF4G, which are templates for translation (By similarity).</text>
</comment>
<comment type="function">
    <molecule>Nuclear inclusion protein A</molecule>
    <text evidence="2">Has RNA-binding and proteolytic activities.</text>
</comment>
<comment type="function">
    <molecule>Nuclear inclusion protein B</molecule>
    <text>An RNA-dependent RNA polymerase that plays an essential role in the virus replication.</text>
</comment>
<comment type="function">
    <molecule>Capsid protein</molecule>
    <text evidence="2">Involved in aphid transmission, cell-to-cell and systemis movement, encapsidation of the viral RNA and in the regulation of viral RNA amplification.</text>
</comment>
<comment type="catalytic activity">
    <molecule>Nuclear inclusion protein B</molecule>
    <reaction evidence="10">
        <text>RNA(n) + a ribonucleoside 5'-triphosphate = RNA(n+1) + diphosphate</text>
        <dbReference type="Rhea" id="RHEA:21248"/>
        <dbReference type="Rhea" id="RHEA-COMP:14527"/>
        <dbReference type="Rhea" id="RHEA-COMP:17342"/>
        <dbReference type="ChEBI" id="CHEBI:33019"/>
        <dbReference type="ChEBI" id="CHEBI:61557"/>
        <dbReference type="ChEBI" id="CHEBI:140395"/>
        <dbReference type="EC" id="2.7.7.48"/>
    </reaction>
</comment>
<comment type="catalytic activity">
    <molecule>Nuclear inclusion protein A</molecule>
    <reaction evidence="2">
        <text>Hydrolyzes glutaminyl bonds, and activity is further restricted by preferences for the amino acids in P6 - P1' that vary with the species of potyvirus, e.g. Glu-Xaa-Xaa-Tyr-Xaa-Gln-|-(Ser or Gly) for the enzyme from tobacco etch virus. The natural substrate is the viral polyprotein, but other proteins and oligopeptides containing the appropriate consensus sequence are also cleaved.</text>
        <dbReference type="EC" id="3.4.22.44"/>
    </reaction>
</comment>
<comment type="catalytic activity">
    <molecule>Helper component proteinase</molecule>
    <reaction evidence="2">
        <text>Hydrolyzes a Gly-|-Gly bond at its own C-terminus, commonly in the sequence -Tyr-Xaa-Val-Gly-|-Gly, in the processing of the potyviral polyprotein.</text>
        <dbReference type="EC" id="3.4.22.45"/>
    </reaction>
</comment>
<comment type="subunit">
    <molecule>Viral genome-linked protein</molecule>
    <text evidence="6">Interacts with host eIF4E protein (via cap-binding region); this interaction mediates the translation of the VPg-viral RNA conjugates (By similarity). Part of a complex that comprises VPg, RNA, host EIF4E and EIF4G; this interaction mediates the translation of the VPg-viral RNA conjugates (By similarity).</text>
</comment>
<comment type="subcellular location">
    <molecule>6 kDa protein 1</molecule>
    <subcellularLocation>
        <location>Host cytoplasmic vesicle</location>
    </subcellularLocation>
    <text evidence="4">Probably colocalizes with 6K2-induced vesicles associated with host chloroplasts.</text>
</comment>
<comment type="subcellular location">
    <molecule>6 kDa protein 2</molecule>
    <subcellularLocation>
        <location evidence="3">Host cytoplasmic vesicle</location>
    </subcellularLocation>
    <text evidence="3">6K-induced vesicles associate with host chloroplasts.</text>
</comment>
<comment type="subcellular location">
    <molecule>Viral genome-linked protein</molecule>
    <subcellularLocation>
        <location evidence="7">Host nucleus</location>
    </subcellularLocation>
    <text evidence="7">Binds to host plant eIF4E proteins in the host nucleus.</text>
</comment>
<comment type="subcellular location">
    <molecule>Capsid protein</molecule>
    <subcellularLocation>
        <location evidence="17">Virion</location>
    </subcellularLocation>
</comment>
<comment type="alternative products">
    <event type="ribosomal frameshifting"/>
    <isoform>
        <id>Q84934-1</id>
        <name>Genome polyprotein</name>
        <sequence type="displayed"/>
    </isoform>
    <isoform>
        <id>P0CK04-1</id>
        <name>P3N-PIPO polyprotein</name>
        <sequence type="external"/>
    </isoform>
</comment>
<comment type="domain">
    <molecule>Helper component proteinase</molecule>
    <text>The N-terminus is involved in interaction with stylets. The central part is involved in interaction with virions and the C-terminus is involved in cell-to cell movement of the virus.</text>
</comment>
<comment type="PTM">
    <molecule>Viral genome-linked protein</molecule>
    <text evidence="3">VPg is uridylylated by the polymerase and is covalently attached to the 5'-end of the genomic RNA. This uridylylated form acts as a nucleotide-peptide primer for the polymerase (By similarity).</text>
</comment>
<comment type="PTM">
    <molecule>Genome polyprotein</molecule>
    <text evidence="1">Potyviral RNA is expressed as two polyproteins which undergo post-translational proteolytic processing. Genome polyprotein is processed by NIa-pro, P1 and HC-pro proteinases resulting in the production of at least ten individual proteins. P3N-PIPO polyprotein is cleaved by P1 and HC-pro proteinases resulting in the production of three individual proteins. The P1 proteinase and the HC-pro cleave only their respective C-termini autocatalytically. 6K1 is essential for proper proteolytic separation of P3 from CI (By similarity).</text>
</comment>
<comment type="miscellaneous">
    <molecule>Isoform Genome polyprotein</molecule>
    <text>Produced by conventional translation.</text>
</comment>
<comment type="similarity">
    <text evidence="17">Belongs to the potyviridae genome polyprotein family.</text>
</comment>
<reference key="1">
    <citation type="journal article" date="1993" name="Virus Genes">
        <title>Comparative sequence analysis of four complete primary structures of plum pox virus strains.</title>
        <authorList>
            <person name="Palkovics L."/>
            <person name="Burgyan J."/>
            <person name="Balazs E."/>
        </authorList>
    </citation>
    <scope>NUCLEOTIDE SEQUENCE [GENOMIC RNA]</scope>
</reference>
<reference key="2">
    <citation type="journal article" date="2001" name="Virus Res.">
        <title>Potyvirus proteins: a wealth of functions.</title>
        <authorList>
            <person name="Urcuqui-Inchima S."/>
            <person name="Haenni A.L."/>
            <person name="Bernardi F."/>
        </authorList>
    </citation>
    <scope>REVIEW</scope>
</reference>
<organism>
    <name type="scientific">Plum pox potyvirus (strain SK 68)</name>
    <name type="common">PPV</name>
    <dbReference type="NCBI Taxonomy" id="103927"/>
    <lineage>
        <taxon>Viruses</taxon>
        <taxon>Riboviria</taxon>
        <taxon>Orthornavirae</taxon>
        <taxon>Pisuviricota</taxon>
        <taxon>Stelpaviricetes</taxon>
        <taxon>Patatavirales</taxon>
        <taxon>Potyviridae</taxon>
        <taxon>Potyvirus</taxon>
        <taxon>Potyvirus plumpoxi</taxon>
        <taxon>Plum pox virus</taxon>
    </lineage>
</organism>